<proteinExistence type="evidence at transcript level"/>
<protein>
    <recommendedName>
        <fullName>Aspartate aminotransferase P2, mitochondrial</fullName>
        <ecNumber>2.6.1.1</ecNumber>
    </recommendedName>
    <alternativeName>
        <fullName>Transaminase A</fullName>
    </alternativeName>
</protein>
<reference key="1">
    <citation type="journal article" date="1992" name="Plant Mol. Biol.">
        <title>Molecular cloning of a cDNA encoding aspartate aminotransferase-P2 from lupin root nodules.</title>
        <authorList>
            <person name="Reynolds P.H.S."/>
            <person name="Smith L.A."/>
            <person name="Jones W.T."/>
            <person name="Dickson J.M.J."/>
            <person name="Jones S.J."/>
            <person name="Rodber K."/>
            <person name="Liddane C.P."/>
        </authorList>
    </citation>
    <scope>NUCLEOTIDE SEQUENCE [MRNA]</scope>
    <source>
        <strain>cv. Uniharvest</strain>
        <tissue>Root nodule</tissue>
    </source>
</reference>
<comment type="function">
    <text>Important for the metabolism of amino acids and Krebs-cycle related organic acids. In plants, it is involved in nitrogen metabolism and in aspects of carbon and energy metabolism.</text>
</comment>
<comment type="catalytic activity">
    <reaction>
        <text>L-aspartate + 2-oxoglutarate = oxaloacetate + L-glutamate</text>
        <dbReference type="Rhea" id="RHEA:21824"/>
        <dbReference type="ChEBI" id="CHEBI:16452"/>
        <dbReference type="ChEBI" id="CHEBI:16810"/>
        <dbReference type="ChEBI" id="CHEBI:29985"/>
        <dbReference type="ChEBI" id="CHEBI:29991"/>
        <dbReference type="EC" id="2.6.1.1"/>
    </reaction>
</comment>
<comment type="cofactor">
    <cofactor>
        <name>pyridoxal 5'-phosphate</name>
        <dbReference type="ChEBI" id="CHEBI:597326"/>
    </cofactor>
</comment>
<comment type="subunit">
    <text evidence="1">Homodimer.</text>
</comment>
<comment type="subcellular location">
    <subcellularLocation>
        <location>Mitochondrion matrix</location>
    </subcellularLocation>
</comment>
<comment type="miscellaneous">
    <text>In eukaryotes there are cytoplasmic, mitochondrial and chloroplastic isozymes.</text>
</comment>
<comment type="similarity">
    <text evidence="3">Belongs to the class-I pyridoxal-phosphate-dependent aminotransferase family.</text>
</comment>
<keyword id="KW-0032">Aminotransferase</keyword>
<keyword id="KW-0496">Mitochondrion</keyword>
<keyword id="KW-0663">Pyridoxal phosphate</keyword>
<keyword id="KW-0808">Transferase</keyword>
<keyword id="KW-0809">Transit peptide</keyword>
<dbReference type="EC" id="2.6.1.1"/>
<dbReference type="EMBL" id="X59761">
    <property type="protein sequence ID" value="CAA42430.1"/>
    <property type="molecule type" value="mRNA"/>
</dbReference>
<dbReference type="PIR" id="S22465">
    <property type="entry name" value="XNYLB"/>
</dbReference>
<dbReference type="SMR" id="P26563"/>
<dbReference type="GO" id="GO:0005759">
    <property type="term" value="C:mitochondrial matrix"/>
    <property type="evidence" value="ECO:0007669"/>
    <property type="project" value="UniProtKB-SubCell"/>
</dbReference>
<dbReference type="GO" id="GO:0005739">
    <property type="term" value="C:mitochondrion"/>
    <property type="evidence" value="ECO:0000250"/>
    <property type="project" value="UniProtKB"/>
</dbReference>
<dbReference type="GO" id="GO:0004069">
    <property type="term" value="F:L-aspartate:2-oxoglutarate aminotransferase activity"/>
    <property type="evidence" value="ECO:0000250"/>
    <property type="project" value="UniProtKB"/>
</dbReference>
<dbReference type="GO" id="GO:0030170">
    <property type="term" value="F:pyridoxal phosphate binding"/>
    <property type="evidence" value="ECO:0007669"/>
    <property type="project" value="InterPro"/>
</dbReference>
<dbReference type="GO" id="GO:0006103">
    <property type="term" value="P:2-oxoglutarate metabolic process"/>
    <property type="evidence" value="ECO:0000250"/>
    <property type="project" value="UniProtKB"/>
</dbReference>
<dbReference type="GO" id="GO:0006531">
    <property type="term" value="P:aspartate metabolic process"/>
    <property type="evidence" value="ECO:0000250"/>
    <property type="project" value="UniProtKB"/>
</dbReference>
<dbReference type="GO" id="GO:0009058">
    <property type="term" value="P:biosynthetic process"/>
    <property type="evidence" value="ECO:0007669"/>
    <property type="project" value="InterPro"/>
</dbReference>
<dbReference type="GO" id="GO:0006536">
    <property type="term" value="P:glutamate metabolic process"/>
    <property type="evidence" value="ECO:0000250"/>
    <property type="project" value="UniProtKB"/>
</dbReference>
<dbReference type="CDD" id="cd00609">
    <property type="entry name" value="AAT_like"/>
    <property type="match status" value="1"/>
</dbReference>
<dbReference type="FunFam" id="3.40.640.10:FF:000015">
    <property type="entry name" value="Aspartate aminotransferase"/>
    <property type="match status" value="1"/>
</dbReference>
<dbReference type="FunFam" id="3.90.1150.10:FF:000001">
    <property type="entry name" value="Aspartate aminotransferase"/>
    <property type="match status" value="1"/>
</dbReference>
<dbReference type="Gene3D" id="3.90.1150.10">
    <property type="entry name" value="Aspartate Aminotransferase, domain 1"/>
    <property type="match status" value="1"/>
</dbReference>
<dbReference type="Gene3D" id="3.40.640.10">
    <property type="entry name" value="Type I PLP-dependent aspartate aminotransferase-like (Major domain)"/>
    <property type="match status" value="1"/>
</dbReference>
<dbReference type="InterPro" id="IPR004839">
    <property type="entry name" value="Aminotransferase_I/II_large"/>
</dbReference>
<dbReference type="InterPro" id="IPR000796">
    <property type="entry name" value="Asp_trans"/>
</dbReference>
<dbReference type="InterPro" id="IPR004838">
    <property type="entry name" value="NHTrfase_class1_PyrdxlP-BS"/>
</dbReference>
<dbReference type="InterPro" id="IPR015424">
    <property type="entry name" value="PyrdxlP-dep_Trfase"/>
</dbReference>
<dbReference type="InterPro" id="IPR015421">
    <property type="entry name" value="PyrdxlP-dep_Trfase_major"/>
</dbReference>
<dbReference type="InterPro" id="IPR015422">
    <property type="entry name" value="PyrdxlP-dep_Trfase_small"/>
</dbReference>
<dbReference type="NCBIfam" id="NF006719">
    <property type="entry name" value="PRK09257.1"/>
    <property type="match status" value="1"/>
</dbReference>
<dbReference type="PANTHER" id="PTHR11879">
    <property type="entry name" value="ASPARTATE AMINOTRANSFERASE"/>
    <property type="match status" value="1"/>
</dbReference>
<dbReference type="PANTHER" id="PTHR11879:SF46">
    <property type="entry name" value="ASPARTATE AMINOTRANSFERASE, CYTOPLASMIC"/>
    <property type="match status" value="1"/>
</dbReference>
<dbReference type="Pfam" id="PF00155">
    <property type="entry name" value="Aminotran_1_2"/>
    <property type="match status" value="1"/>
</dbReference>
<dbReference type="PRINTS" id="PR00799">
    <property type="entry name" value="TRANSAMINASE"/>
</dbReference>
<dbReference type="SUPFAM" id="SSF53383">
    <property type="entry name" value="PLP-dependent transferases"/>
    <property type="match status" value="1"/>
</dbReference>
<dbReference type="PROSITE" id="PS00105">
    <property type="entry name" value="AA_TRANSFER_CLASS_1"/>
    <property type="match status" value="1"/>
</dbReference>
<accession>P26563</accession>
<sequence length="454" mass="49916">SSLLSIPSLSLQYNDKLKVGGNSLRFSKEQSNTFSNAKSSCRISMVAAVNVSRFEGIPMAPPDPILGVSEAFRADTSDAKLNLGVGAYRTEELQPYVLKVVNKAENLMLERGQNKEYLAIEGLAAFNKATAELLLGADNPAIKQQRVATVQGLSGTGSLRLGAALIERYFPGAKVLISAPTWGNHKNIFNDARVPWSEYRYYDPKTVGLDFEGMIEDIKAAPEGTFVLLHGCAHNPTGIDPTPEQWEKIADVIQEKNHIPFFDVAYQGFASGSLDEDAASVRLFVARGLEVLVAQSYSKNLGLYAERIGAINVISSSPESAARVKSQLKRIARPMYSNPPVHGARIVADIVGNPALFDEWKVEMEMMAGRIKNVRQQLYDSISSKDKSGKDWSFILKQIGMFSYTGLNKNQSDNMTNKWHVYMTKDGRISLAGLSLAKCEYLADAIIDSFHYVS</sequence>
<feature type="transit peptide" description="Mitochondrion" evidence="2">
    <location>
        <begin position="1" status="less than"/>
        <end position="49"/>
    </location>
</feature>
<feature type="chain" id="PRO_0000001212" description="Aspartate aminotransferase P2, mitochondrial">
    <location>
        <begin position="50"/>
        <end position="454"/>
    </location>
</feature>
<feature type="binding site" evidence="1">
    <location>
        <position position="86"/>
    </location>
    <ligand>
        <name>L-aspartate</name>
        <dbReference type="ChEBI" id="CHEBI:29991"/>
    </ligand>
</feature>
<feature type="binding site" evidence="1">
    <location>
        <position position="182"/>
    </location>
    <ligand>
        <name>L-aspartate</name>
        <dbReference type="ChEBI" id="CHEBI:29991"/>
    </ligand>
</feature>
<feature type="binding site" evidence="1">
    <location>
        <position position="235"/>
    </location>
    <ligand>
        <name>L-aspartate</name>
        <dbReference type="ChEBI" id="CHEBI:29991"/>
    </ligand>
</feature>
<feature type="binding site" evidence="1">
    <location>
        <position position="428"/>
    </location>
    <ligand>
        <name>L-aspartate</name>
        <dbReference type="ChEBI" id="CHEBI:29991"/>
    </ligand>
</feature>
<feature type="modified residue" description="N6-(pyridoxal phosphate)lysine" evidence="1">
    <location>
        <position position="299"/>
    </location>
</feature>
<feature type="non-terminal residue">
    <location>
        <position position="1"/>
    </location>
</feature>
<organism>
    <name type="scientific">Lupinus angustifolius</name>
    <name type="common">Narrow-leaved blue lupine</name>
    <dbReference type="NCBI Taxonomy" id="3871"/>
    <lineage>
        <taxon>Eukaryota</taxon>
        <taxon>Viridiplantae</taxon>
        <taxon>Streptophyta</taxon>
        <taxon>Embryophyta</taxon>
        <taxon>Tracheophyta</taxon>
        <taxon>Spermatophyta</taxon>
        <taxon>Magnoliopsida</taxon>
        <taxon>eudicotyledons</taxon>
        <taxon>Gunneridae</taxon>
        <taxon>Pentapetalae</taxon>
        <taxon>rosids</taxon>
        <taxon>fabids</taxon>
        <taxon>Fabales</taxon>
        <taxon>Fabaceae</taxon>
        <taxon>Papilionoideae</taxon>
        <taxon>50 kb inversion clade</taxon>
        <taxon>genistoids sensu lato</taxon>
        <taxon>core genistoids</taxon>
        <taxon>Genisteae</taxon>
        <taxon>Lupinus</taxon>
    </lineage>
</organism>
<evidence type="ECO:0000250" key="1"/>
<evidence type="ECO:0000255" key="2"/>
<evidence type="ECO:0000305" key="3"/>
<name>AATM_LUPAN</name>